<proteinExistence type="inferred from homology"/>
<accession>O30052</accession>
<evidence type="ECO:0000255" key="1">
    <source>
        <dbReference type="HAMAP-Rule" id="MF_00331"/>
    </source>
</evidence>
<evidence type="ECO:0000305" key="2"/>
<keyword id="KW-0001">2Fe-2S</keyword>
<keyword id="KW-0963">Cytoplasm</keyword>
<keyword id="KW-0408">Iron</keyword>
<keyword id="KW-0411">Iron-sulfur</keyword>
<keyword id="KW-0479">Metal-binding</keyword>
<keyword id="KW-0663">Pyridoxal phosphate</keyword>
<keyword id="KW-1185">Reference proteome</keyword>
<keyword id="KW-0808">Transferase</keyword>
<sequence>MPYFDYASTKPVDERVVEAMLPYMTEHFGNPSSVHSYGFKAREVIEEARGKISELINGGGGDIVFTSGATESNNLALIGYAMRNARKGKHVLVSSIEHMSVINPAKYLQKQGFEVEFIPVDKYGTVDLEFIEEKIREDTILVSVQHANNEIGTIQPIKEISEIINGRAALHVDATASLGQIEVDVEKIGADMLTISSNDIYGPKGVGALWVRQGVRLQPIILGGGQEKGLRSGSENVPAIVGFGKAAEITAKEWGEEAGRLRRLRDRIIDNVLKIEESYLNGHPEKRLPNNVNVRFSYIEGESIVLSLDMAGIQASTGSACSSKTLQPSHVLMACGLKHEEAHGTLLLTLGRYNTDEDVDRLLEVLPGVIERLRSMSPLYRR</sequence>
<reference key="1">
    <citation type="journal article" date="1997" name="Nature">
        <title>The complete genome sequence of the hyperthermophilic, sulphate-reducing archaeon Archaeoglobus fulgidus.</title>
        <authorList>
            <person name="Klenk H.-P."/>
            <person name="Clayton R.A."/>
            <person name="Tomb J.-F."/>
            <person name="White O."/>
            <person name="Nelson K.E."/>
            <person name="Ketchum K.A."/>
            <person name="Dodson R.J."/>
            <person name="Gwinn M.L."/>
            <person name="Hickey E.K."/>
            <person name="Peterson J.D."/>
            <person name="Richardson D.L."/>
            <person name="Kerlavage A.R."/>
            <person name="Graham D.E."/>
            <person name="Kyrpides N.C."/>
            <person name="Fleischmann R.D."/>
            <person name="Quackenbush J."/>
            <person name="Lee N.H."/>
            <person name="Sutton G.G."/>
            <person name="Gill S.R."/>
            <person name="Kirkness E.F."/>
            <person name="Dougherty B.A."/>
            <person name="McKenney K."/>
            <person name="Adams M.D."/>
            <person name="Loftus B.J."/>
            <person name="Peterson S.N."/>
            <person name="Reich C.I."/>
            <person name="McNeil L.K."/>
            <person name="Badger J.H."/>
            <person name="Glodek A."/>
            <person name="Zhou L."/>
            <person name="Overbeek R."/>
            <person name="Gocayne J.D."/>
            <person name="Weidman J.F."/>
            <person name="McDonald L.A."/>
            <person name="Utterback T.R."/>
            <person name="Cotton M.D."/>
            <person name="Spriggs T."/>
            <person name="Artiach P."/>
            <person name="Kaine B.P."/>
            <person name="Sykes S.M."/>
            <person name="Sadow P.W."/>
            <person name="D'Andrea K.P."/>
            <person name="Bowman C."/>
            <person name="Fujii C."/>
            <person name="Garland S.A."/>
            <person name="Mason T.M."/>
            <person name="Olsen G.J."/>
            <person name="Fraser C.M."/>
            <person name="Smith H.O."/>
            <person name="Woese C.R."/>
            <person name="Venter J.C."/>
        </authorList>
    </citation>
    <scope>NUCLEOTIDE SEQUENCE [LARGE SCALE GENOMIC DNA]</scope>
    <source>
        <strain>ATCC 49558 / DSM 4304 / JCM 9628 / NBRC 100126 / VC-16</strain>
    </source>
</reference>
<comment type="function">
    <text evidence="1">Master enzyme that delivers sulfur to a number of partners involved in Fe-S cluster assembly, tRNA modification or cofactor biosynthesis. Catalyzes the removal of elemental sulfur atoms from cysteine to produce alanine. Functions as a sulfur delivery protein for Fe-S cluster synthesis onto IscU, an Fe-S scaffold assembly protein, as well as other S acceptor proteins.</text>
</comment>
<comment type="catalytic activity">
    <reaction evidence="1">
        <text>(sulfur carrier)-H + L-cysteine = (sulfur carrier)-SH + L-alanine</text>
        <dbReference type="Rhea" id="RHEA:43892"/>
        <dbReference type="Rhea" id="RHEA-COMP:14737"/>
        <dbReference type="Rhea" id="RHEA-COMP:14739"/>
        <dbReference type="ChEBI" id="CHEBI:29917"/>
        <dbReference type="ChEBI" id="CHEBI:35235"/>
        <dbReference type="ChEBI" id="CHEBI:57972"/>
        <dbReference type="ChEBI" id="CHEBI:64428"/>
        <dbReference type="EC" id="2.8.1.7"/>
    </reaction>
</comment>
<comment type="cofactor">
    <cofactor evidence="1">
        <name>pyridoxal 5'-phosphate</name>
        <dbReference type="ChEBI" id="CHEBI:597326"/>
    </cofactor>
</comment>
<comment type="pathway">
    <text evidence="1">Cofactor biosynthesis; iron-sulfur cluster biosynthesis.</text>
</comment>
<comment type="subunit">
    <text evidence="1">Homodimer. Forms a heterotetramer with IscU, interacts with other sulfur acceptors.</text>
</comment>
<comment type="subcellular location">
    <subcellularLocation>
        <location evidence="1">Cytoplasm</location>
    </subcellularLocation>
</comment>
<comment type="miscellaneous">
    <text evidence="1">In Archaea the pyridoxal phosphate cofactor is not covalently bound to Lys but ligated by other amino acids.</text>
</comment>
<comment type="similarity">
    <text evidence="1">Belongs to the class-V pyridoxal-phosphate-dependent aminotransferase family. NifS/IscS subfamily.</text>
</comment>
<comment type="sequence caution" evidence="2">
    <conflict type="erroneous initiation">
        <sequence resource="EMBL-CDS" id="AAB91039"/>
    </conflict>
    <text>Extended N-terminus.</text>
</comment>
<gene>
    <name evidence="1" type="primary">iscS1</name>
    <name type="ordered locus">AF_0186</name>
</gene>
<feature type="chain" id="PRO_0000150287" description="Cysteine desulfurase IscS 1">
    <location>
        <begin position="1"/>
        <end position="382"/>
    </location>
</feature>
<feature type="active site" description="Cysteine persulfide intermediate" evidence="1">
    <location>
        <position position="321"/>
    </location>
</feature>
<feature type="binding site" evidence="1">
    <location>
        <position position="149"/>
    </location>
    <ligand>
        <name>pyridoxal 5'-phosphate</name>
        <dbReference type="ChEBI" id="CHEBI:597326"/>
    </ligand>
</feature>
<feature type="binding site" description="via persulfide group" evidence="1">
    <location>
        <position position="321"/>
    </location>
    <ligand>
        <name>[2Fe-2S] cluster</name>
        <dbReference type="ChEBI" id="CHEBI:190135"/>
        <note>ligand shared with IscU</note>
    </ligand>
</feature>
<dbReference type="EC" id="2.8.1.7" evidence="1"/>
<dbReference type="EMBL" id="AE000782">
    <property type="protein sequence ID" value="AAB91039.1"/>
    <property type="status" value="ALT_INIT"/>
    <property type="molecule type" value="Genomic_DNA"/>
</dbReference>
<dbReference type="PIR" id="B69273">
    <property type="entry name" value="B69273"/>
</dbReference>
<dbReference type="RefSeq" id="WP_048064599.1">
    <property type="nucleotide sequence ID" value="NC_000917.1"/>
</dbReference>
<dbReference type="SMR" id="O30052"/>
<dbReference type="STRING" id="224325.AF_0186"/>
<dbReference type="PaxDb" id="224325-AF_0186"/>
<dbReference type="EnsemblBacteria" id="AAB91039">
    <property type="protein sequence ID" value="AAB91039"/>
    <property type="gene ID" value="AF_0186"/>
</dbReference>
<dbReference type="KEGG" id="afu:AF_0186"/>
<dbReference type="eggNOG" id="arCOG00066">
    <property type="taxonomic scope" value="Archaea"/>
</dbReference>
<dbReference type="HOGENOM" id="CLU_003433_0_0_2"/>
<dbReference type="OrthoDB" id="9577at2157"/>
<dbReference type="PhylomeDB" id="O30052"/>
<dbReference type="UniPathway" id="UPA00266"/>
<dbReference type="Proteomes" id="UP000002199">
    <property type="component" value="Chromosome"/>
</dbReference>
<dbReference type="GO" id="GO:0005737">
    <property type="term" value="C:cytoplasm"/>
    <property type="evidence" value="ECO:0007669"/>
    <property type="project" value="UniProtKB-SubCell"/>
</dbReference>
<dbReference type="GO" id="GO:0051537">
    <property type="term" value="F:2 iron, 2 sulfur cluster binding"/>
    <property type="evidence" value="ECO:0007669"/>
    <property type="project" value="UniProtKB-UniRule"/>
</dbReference>
<dbReference type="GO" id="GO:0031071">
    <property type="term" value="F:cysteine desulfurase activity"/>
    <property type="evidence" value="ECO:0007669"/>
    <property type="project" value="UniProtKB-UniRule"/>
</dbReference>
<dbReference type="GO" id="GO:0046872">
    <property type="term" value="F:metal ion binding"/>
    <property type="evidence" value="ECO:0007669"/>
    <property type="project" value="UniProtKB-KW"/>
</dbReference>
<dbReference type="GO" id="GO:0030170">
    <property type="term" value="F:pyridoxal phosphate binding"/>
    <property type="evidence" value="ECO:0007669"/>
    <property type="project" value="UniProtKB-UniRule"/>
</dbReference>
<dbReference type="GO" id="GO:0044571">
    <property type="term" value="P:[2Fe-2S] cluster assembly"/>
    <property type="evidence" value="ECO:0007669"/>
    <property type="project" value="UniProtKB-UniRule"/>
</dbReference>
<dbReference type="Gene3D" id="3.90.1150.10">
    <property type="entry name" value="Aspartate Aminotransferase, domain 1"/>
    <property type="match status" value="1"/>
</dbReference>
<dbReference type="Gene3D" id="3.40.640.10">
    <property type="entry name" value="Type I PLP-dependent aspartate aminotransferase-like (Major domain)"/>
    <property type="match status" value="1"/>
</dbReference>
<dbReference type="HAMAP" id="MF_00331">
    <property type="entry name" value="Cys_desulf_IscS"/>
    <property type="match status" value="1"/>
</dbReference>
<dbReference type="InterPro" id="IPR000192">
    <property type="entry name" value="Aminotrans_V_dom"/>
</dbReference>
<dbReference type="InterPro" id="IPR010240">
    <property type="entry name" value="Cys_deSase_IscS"/>
</dbReference>
<dbReference type="InterPro" id="IPR016454">
    <property type="entry name" value="Cysteine_dSase"/>
</dbReference>
<dbReference type="InterPro" id="IPR015424">
    <property type="entry name" value="PyrdxlP-dep_Trfase"/>
</dbReference>
<dbReference type="InterPro" id="IPR015421">
    <property type="entry name" value="PyrdxlP-dep_Trfase_major"/>
</dbReference>
<dbReference type="InterPro" id="IPR015422">
    <property type="entry name" value="PyrdxlP-dep_Trfase_small"/>
</dbReference>
<dbReference type="NCBIfam" id="NF002806">
    <property type="entry name" value="PRK02948.1"/>
    <property type="match status" value="1"/>
</dbReference>
<dbReference type="PANTHER" id="PTHR11601:SF34">
    <property type="entry name" value="CYSTEINE DESULFURASE"/>
    <property type="match status" value="1"/>
</dbReference>
<dbReference type="PANTHER" id="PTHR11601">
    <property type="entry name" value="CYSTEINE DESULFURYLASE FAMILY MEMBER"/>
    <property type="match status" value="1"/>
</dbReference>
<dbReference type="Pfam" id="PF00266">
    <property type="entry name" value="Aminotran_5"/>
    <property type="match status" value="1"/>
</dbReference>
<dbReference type="PIRSF" id="PIRSF005572">
    <property type="entry name" value="NifS"/>
    <property type="match status" value="1"/>
</dbReference>
<dbReference type="SUPFAM" id="SSF53383">
    <property type="entry name" value="PLP-dependent transferases"/>
    <property type="match status" value="1"/>
</dbReference>
<organism>
    <name type="scientific">Archaeoglobus fulgidus (strain ATCC 49558 / DSM 4304 / JCM 9628 / NBRC 100126 / VC-16)</name>
    <dbReference type="NCBI Taxonomy" id="224325"/>
    <lineage>
        <taxon>Archaea</taxon>
        <taxon>Methanobacteriati</taxon>
        <taxon>Methanobacteriota</taxon>
        <taxon>Archaeoglobi</taxon>
        <taxon>Archaeoglobales</taxon>
        <taxon>Archaeoglobaceae</taxon>
        <taxon>Archaeoglobus</taxon>
    </lineage>
</organism>
<protein>
    <recommendedName>
        <fullName evidence="1">Cysteine desulfurase IscS 1</fullName>
        <ecNumber evidence="1">2.8.1.7</ecNumber>
    </recommendedName>
</protein>
<name>ISCS1_ARCFU</name>